<gene>
    <name evidence="1" type="primary">aat</name>
    <name type="ordered locus">PSPTO_3350</name>
</gene>
<protein>
    <recommendedName>
        <fullName evidence="1">Leucyl/phenylalanyl-tRNA--protein transferase</fullName>
        <ecNumber evidence="1">2.3.2.6</ecNumber>
    </recommendedName>
    <alternativeName>
        <fullName evidence="1">L/F-transferase</fullName>
    </alternativeName>
    <alternativeName>
        <fullName evidence="1">Leucyltransferase</fullName>
    </alternativeName>
    <alternativeName>
        <fullName evidence="1">Phenyalanyltransferase</fullName>
    </alternativeName>
</protein>
<evidence type="ECO:0000255" key="1">
    <source>
        <dbReference type="HAMAP-Rule" id="MF_00688"/>
    </source>
</evidence>
<dbReference type="EC" id="2.3.2.6" evidence="1"/>
<dbReference type="EMBL" id="AE016853">
    <property type="protein sequence ID" value="AAO56828.1"/>
    <property type="molecule type" value="Genomic_DNA"/>
</dbReference>
<dbReference type="RefSeq" id="NP_793133.1">
    <property type="nucleotide sequence ID" value="NC_004578.1"/>
</dbReference>
<dbReference type="RefSeq" id="WP_005767399.1">
    <property type="nucleotide sequence ID" value="NC_004578.1"/>
</dbReference>
<dbReference type="SMR" id="Q87ZS4"/>
<dbReference type="STRING" id="223283.PSPTO_3350"/>
<dbReference type="GeneID" id="1185009"/>
<dbReference type="KEGG" id="pst:PSPTO_3350"/>
<dbReference type="PATRIC" id="fig|223283.9.peg.3429"/>
<dbReference type="eggNOG" id="COG2360">
    <property type="taxonomic scope" value="Bacteria"/>
</dbReference>
<dbReference type="HOGENOM" id="CLU_075045_0_0_6"/>
<dbReference type="OrthoDB" id="9790282at2"/>
<dbReference type="PhylomeDB" id="Q87ZS4"/>
<dbReference type="Proteomes" id="UP000002515">
    <property type="component" value="Chromosome"/>
</dbReference>
<dbReference type="GO" id="GO:0005737">
    <property type="term" value="C:cytoplasm"/>
    <property type="evidence" value="ECO:0007669"/>
    <property type="project" value="UniProtKB-SubCell"/>
</dbReference>
<dbReference type="GO" id="GO:0008914">
    <property type="term" value="F:leucyl-tRNA--protein transferase activity"/>
    <property type="evidence" value="ECO:0007669"/>
    <property type="project" value="UniProtKB-UniRule"/>
</dbReference>
<dbReference type="GO" id="GO:0030163">
    <property type="term" value="P:protein catabolic process"/>
    <property type="evidence" value="ECO:0007669"/>
    <property type="project" value="UniProtKB-UniRule"/>
</dbReference>
<dbReference type="FunFam" id="3.30.70.3550:FF:000001">
    <property type="entry name" value="Leucyl/phenylalanyl-tRNA--protein transferase"/>
    <property type="match status" value="1"/>
</dbReference>
<dbReference type="FunFam" id="3.40.630.70:FF:000001">
    <property type="entry name" value="Leucyl/phenylalanyl-tRNA--protein transferase"/>
    <property type="match status" value="1"/>
</dbReference>
<dbReference type="Gene3D" id="3.40.630.70">
    <property type="entry name" value="Leucyl/phenylalanyl-tRNA-protein transferase, C-terminal domain"/>
    <property type="match status" value="1"/>
</dbReference>
<dbReference type="Gene3D" id="3.30.70.3550">
    <property type="entry name" value="Leucyl/phenylalanyl-tRNA-protein transferase, N-terminal domain"/>
    <property type="match status" value="1"/>
</dbReference>
<dbReference type="HAMAP" id="MF_00688">
    <property type="entry name" value="Leu_Phe_trans"/>
    <property type="match status" value="1"/>
</dbReference>
<dbReference type="InterPro" id="IPR016181">
    <property type="entry name" value="Acyl_CoA_acyltransferase"/>
</dbReference>
<dbReference type="InterPro" id="IPR004616">
    <property type="entry name" value="Leu/Phe-tRNA_Trfase"/>
</dbReference>
<dbReference type="InterPro" id="IPR042203">
    <property type="entry name" value="Leu/Phe-tRNA_Trfase_C"/>
</dbReference>
<dbReference type="InterPro" id="IPR042221">
    <property type="entry name" value="Leu/Phe-tRNA_Trfase_N"/>
</dbReference>
<dbReference type="NCBIfam" id="TIGR00667">
    <property type="entry name" value="aat"/>
    <property type="match status" value="1"/>
</dbReference>
<dbReference type="PANTHER" id="PTHR30098">
    <property type="entry name" value="LEUCYL/PHENYLALANYL-TRNA--PROTEIN TRANSFERASE"/>
    <property type="match status" value="1"/>
</dbReference>
<dbReference type="PANTHER" id="PTHR30098:SF2">
    <property type="entry name" value="LEUCYL_PHENYLALANYL-TRNA--PROTEIN TRANSFERASE"/>
    <property type="match status" value="1"/>
</dbReference>
<dbReference type="Pfam" id="PF03588">
    <property type="entry name" value="Leu_Phe_trans"/>
    <property type="match status" value="1"/>
</dbReference>
<dbReference type="SUPFAM" id="SSF55729">
    <property type="entry name" value="Acyl-CoA N-acyltransferases (Nat)"/>
    <property type="match status" value="1"/>
</dbReference>
<name>LFTR_PSESM</name>
<reference key="1">
    <citation type="journal article" date="2003" name="Proc. Natl. Acad. Sci. U.S.A.">
        <title>The complete genome sequence of the Arabidopsis and tomato pathogen Pseudomonas syringae pv. tomato DC3000.</title>
        <authorList>
            <person name="Buell C.R."/>
            <person name="Joardar V."/>
            <person name="Lindeberg M."/>
            <person name="Selengut J."/>
            <person name="Paulsen I.T."/>
            <person name="Gwinn M.L."/>
            <person name="Dodson R.J."/>
            <person name="DeBoy R.T."/>
            <person name="Durkin A.S."/>
            <person name="Kolonay J.F."/>
            <person name="Madupu R."/>
            <person name="Daugherty S.C."/>
            <person name="Brinkac L.M."/>
            <person name="Beanan M.J."/>
            <person name="Haft D.H."/>
            <person name="Nelson W.C."/>
            <person name="Davidsen T.M."/>
            <person name="Zafar N."/>
            <person name="Zhou L."/>
            <person name="Liu J."/>
            <person name="Yuan Q."/>
            <person name="Khouri H.M."/>
            <person name="Fedorova N.B."/>
            <person name="Tran B."/>
            <person name="Russell D."/>
            <person name="Berry K.J."/>
            <person name="Utterback T.R."/>
            <person name="Van Aken S.E."/>
            <person name="Feldblyum T.V."/>
            <person name="D'Ascenzo M."/>
            <person name="Deng W.-L."/>
            <person name="Ramos A.R."/>
            <person name="Alfano J.R."/>
            <person name="Cartinhour S."/>
            <person name="Chatterjee A.K."/>
            <person name="Delaney T.P."/>
            <person name="Lazarowitz S.G."/>
            <person name="Martin G.B."/>
            <person name="Schneider D.J."/>
            <person name="Tang X."/>
            <person name="Bender C.L."/>
            <person name="White O."/>
            <person name="Fraser C.M."/>
            <person name="Collmer A."/>
        </authorList>
    </citation>
    <scope>NUCLEOTIDE SEQUENCE [LARGE SCALE GENOMIC DNA]</scope>
    <source>
        <strain>ATCC BAA-871 / DC3000</strain>
    </source>
</reference>
<feature type="chain" id="PRO_0000207236" description="Leucyl/phenylalanyl-tRNA--protein transferase">
    <location>
        <begin position="1"/>
        <end position="229"/>
    </location>
</feature>
<keyword id="KW-0012">Acyltransferase</keyword>
<keyword id="KW-0963">Cytoplasm</keyword>
<keyword id="KW-1185">Reference proteome</keyword>
<keyword id="KW-0808">Transferase</keyword>
<accession>Q87ZS4</accession>
<organism>
    <name type="scientific">Pseudomonas syringae pv. tomato (strain ATCC BAA-871 / DC3000)</name>
    <dbReference type="NCBI Taxonomy" id="223283"/>
    <lineage>
        <taxon>Bacteria</taxon>
        <taxon>Pseudomonadati</taxon>
        <taxon>Pseudomonadota</taxon>
        <taxon>Gammaproteobacteria</taxon>
        <taxon>Pseudomonadales</taxon>
        <taxon>Pseudomonadaceae</taxon>
        <taxon>Pseudomonas</taxon>
    </lineage>
</organism>
<comment type="function">
    <text evidence="1">Functions in the N-end rule pathway of protein degradation where it conjugates Leu, Phe and, less efficiently, Met from aminoacyl-tRNAs to the N-termini of proteins containing an N-terminal arginine or lysine.</text>
</comment>
<comment type="catalytic activity">
    <reaction evidence="1">
        <text>N-terminal L-lysyl-[protein] + L-leucyl-tRNA(Leu) = N-terminal L-leucyl-L-lysyl-[protein] + tRNA(Leu) + H(+)</text>
        <dbReference type="Rhea" id="RHEA:12340"/>
        <dbReference type="Rhea" id="RHEA-COMP:9613"/>
        <dbReference type="Rhea" id="RHEA-COMP:9622"/>
        <dbReference type="Rhea" id="RHEA-COMP:12670"/>
        <dbReference type="Rhea" id="RHEA-COMP:12671"/>
        <dbReference type="ChEBI" id="CHEBI:15378"/>
        <dbReference type="ChEBI" id="CHEBI:65249"/>
        <dbReference type="ChEBI" id="CHEBI:78442"/>
        <dbReference type="ChEBI" id="CHEBI:78494"/>
        <dbReference type="ChEBI" id="CHEBI:133043"/>
        <dbReference type="EC" id="2.3.2.6"/>
    </reaction>
</comment>
<comment type="catalytic activity">
    <reaction evidence="1">
        <text>N-terminal L-arginyl-[protein] + L-leucyl-tRNA(Leu) = N-terminal L-leucyl-L-arginyl-[protein] + tRNA(Leu) + H(+)</text>
        <dbReference type="Rhea" id="RHEA:50416"/>
        <dbReference type="Rhea" id="RHEA-COMP:9613"/>
        <dbReference type="Rhea" id="RHEA-COMP:9622"/>
        <dbReference type="Rhea" id="RHEA-COMP:12672"/>
        <dbReference type="Rhea" id="RHEA-COMP:12673"/>
        <dbReference type="ChEBI" id="CHEBI:15378"/>
        <dbReference type="ChEBI" id="CHEBI:64719"/>
        <dbReference type="ChEBI" id="CHEBI:78442"/>
        <dbReference type="ChEBI" id="CHEBI:78494"/>
        <dbReference type="ChEBI" id="CHEBI:133044"/>
        <dbReference type="EC" id="2.3.2.6"/>
    </reaction>
</comment>
<comment type="catalytic activity">
    <reaction evidence="1">
        <text>L-phenylalanyl-tRNA(Phe) + an N-terminal L-alpha-aminoacyl-[protein] = an N-terminal L-phenylalanyl-L-alpha-aminoacyl-[protein] + tRNA(Phe)</text>
        <dbReference type="Rhea" id="RHEA:43632"/>
        <dbReference type="Rhea" id="RHEA-COMP:9668"/>
        <dbReference type="Rhea" id="RHEA-COMP:9699"/>
        <dbReference type="Rhea" id="RHEA-COMP:10636"/>
        <dbReference type="Rhea" id="RHEA-COMP:10637"/>
        <dbReference type="ChEBI" id="CHEBI:78442"/>
        <dbReference type="ChEBI" id="CHEBI:78531"/>
        <dbReference type="ChEBI" id="CHEBI:78597"/>
        <dbReference type="ChEBI" id="CHEBI:83561"/>
        <dbReference type="EC" id="2.3.2.6"/>
    </reaction>
</comment>
<comment type="subcellular location">
    <subcellularLocation>
        <location evidence="1">Cytoplasm</location>
    </subcellularLocation>
</comment>
<comment type="similarity">
    <text evidence="1">Belongs to the L/F-transferase family.</text>
</comment>
<sequence>MLTWLNRNNLDFPPLEKALREPDGLLAAGGDLSADRLIKAYRHGCFPWFQEGQPILWWSPDPRTVLLPEELHISRSLGKVLRQSRYRVTFDTDFARVIKACAAPRSYANETWITGSMQDAYLELHRRGHAHSVEVWDQDELVGGLYGLAMGQLFFGESMFSRADNASKVGFATLVEHLTDWGFVLIDCQMPTQHLHSFGARSIPRQTFADYLARHLDQPTDADWLSRRV</sequence>
<proteinExistence type="inferred from homology"/>